<comment type="catalytic activity">
    <reaction>
        <text>holo-[ACP] + malonyl-CoA = malonyl-[ACP] + CoA</text>
        <dbReference type="Rhea" id="RHEA:41792"/>
        <dbReference type="Rhea" id="RHEA-COMP:9623"/>
        <dbReference type="Rhea" id="RHEA-COMP:9685"/>
        <dbReference type="ChEBI" id="CHEBI:57287"/>
        <dbReference type="ChEBI" id="CHEBI:57384"/>
        <dbReference type="ChEBI" id="CHEBI:64479"/>
        <dbReference type="ChEBI" id="CHEBI:78449"/>
        <dbReference type="EC" id="2.3.1.39"/>
    </reaction>
</comment>
<comment type="pathway">
    <text>Lipid metabolism; fatty acid biosynthesis.</text>
</comment>
<comment type="similarity">
    <text evidence="2">Belongs to the FabD family.</text>
</comment>
<protein>
    <recommendedName>
        <fullName>Malonyl CoA-acyl carrier protein transacylase</fullName>
        <shortName>MCT</shortName>
        <ecNumber>2.3.1.39</ecNumber>
    </recommendedName>
</protein>
<proteinExistence type="inferred from homology"/>
<dbReference type="EC" id="2.3.1.39"/>
<dbReference type="EMBL" id="AE014075">
    <property type="protein sequence ID" value="AAN79832.1"/>
    <property type="molecule type" value="Genomic_DNA"/>
</dbReference>
<dbReference type="RefSeq" id="WP_000191372.1">
    <property type="nucleotide sequence ID" value="NZ_CP051263.1"/>
</dbReference>
<dbReference type="SMR" id="P0AAJ0"/>
<dbReference type="STRING" id="199310.c1361"/>
<dbReference type="GeneID" id="75203678"/>
<dbReference type="KEGG" id="ecc:c1361"/>
<dbReference type="eggNOG" id="COG0331">
    <property type="taxonomic scope" value="Bacteria"/>
</dbReference>
<dbReference type="HOGENOM" id="CLU_030558_0_0_6"/>
<dbReference type="BioCyc" id="ECOL199310:C1361-MONOMER"/>
<dbReference type="UniPathway" id="UPA00094"/>
<dbReference type="Proteomes" id="UP000001410">
    <property type="component" value="Chromosome"/>
</dbReference>
<dbReference type="GO" id="GO:0005829">
    <property type="term" value="C:cytosol"/>
    <property type="evidence" value="ECO:0007669"/>
    <property type="project" value="TreeGrafter"/>
</dbReference>
<dbReference type="GO" id="GO:0004314">
    <property type="term" value="F:[acyl-carrier-protein] S-malonyltransferase activity"/>
    <property type="evidence" value="ECO:0007669"/>
    <property type="project" value="UniProtKB-EC"/>
</dbReference>
<dbReference type="GO" id="GO:0006633">
    <property type="term" value="P:fatty acid biosynthetic process"/>
    <property type="evidence" value="ECO:0007669"/>
    <property type="project" value="UniProtKB-UniPathway"/>
</dbReference>
<dbReference type="FunFam" id="3.30.70.250:FF:000001">
    <property type="entry name" value="Malonyl CoA-acyl carrier protein transacylase"/>
    <property type="match status" value="1"/>
</dbReference>
<dbReference type="Gene3D" id="3.30.70.250">
    <property type="entry name" value="Malonyl-CoA ACP transacylase, ACP-binding"/>
    <property type="match status" value="1"/>
</dbReference>
<dbReference type="Gene3D" id="3.40.366.10">
    <property type="entry name" value="Malonyl-Coenzyme A Acyl Carrier Protein, domain 2"/>
    <property type="match status" value="1"/>
</dbReference>
<dbReference type="InterPro" id="IPR001227">
    <property type="entry name" value="Ac_transferase_dom_sf"/>
</dbReference>
<dbReference type="InterPro" id="IPR014043">
    <property type="entry name" value="Acyl_transferase_dom"/>
</dbReference>
<dbReference type="InterPro" id="IPR016035">
    <property type="entry name" value="Acyl_Trfase/lysoPLipase"/>
</dbReference>
<dbReference type="InterPro" id="IPR050858">
    <property type="entry name" value="Mal-CoA-ACP_Trans/PKS_FabD"/>
</dbReference>
<dbReference type="InterPro" id="IPR024925">
    <property type="entry name" value="Malonyl_CoA-ACP_transAc"/>
</dbReference>
<dbReference type="InterPro" id="IPR004410">
    <property type="entry name" value="Malonyl_CoA-ACP_transAc_FabD"/>
</dbReference>
<dbReference type="InterPro" id="IPR016036">
    <property type="entry name" value="Malonyl_transacylase_ACP-bd"/>
</dbReference>
<dbReference type="NCBIfam" id="TIGR00128">
    <property type="entry name" value="fabD"/>
    <property type="match status" value="1"/>
</dbReference>
<dbReference type="PANTHER" id="PTHR42681">
    <property type="entry name" value="MALONYL-COA-ACYL CARRIER PROTEIN TRANSACYLASE, MITOCHONDRIAL"/>
    <property type="match status" value="1"/>
</dbReference>
<dbReference type="PANTHER" id="PTHR42681:SF1">
    <property type="entry name" value="MALONYL-COA-ACYL CARRIER PROTEIN TRANSACYLASE, MITOCHONDRIAL"/>
    <property type="match status" value="1"/>
</dbReference>
<dbReference type="Pfam" id="PF00698">
    <property type="entry name" value="Acyl_transf_1"/>
    <property type="match status" value="1"/>
</dbReference>
<dbReference type="PIRSF" id="PIRSF000446">
    <property type="entry name" value="Mct"/>
    <property type="match status" value="1"/>
</dbReference>
<dbReference type="SMART" id="SM00827">
    <property type="entry name" value="PKS_AT"/>
    <property type="match status" value="1"/>
</dbReference>
<dbReference type="SUPFAM" id="SSF52151">
    <property type="entry name" value="FabD/lysophospholipase-like"/>
    <property type="match status" value="1"/>
</dbReference>
<dbReference type="SUPFAM" id="SSF55048">
    <property type="entry name" value="Probable ACP-binding domain of malonyl-CoA ACP transacylase"/>
    <property type="match status" value="1"/>
</dbReference>
<name>FABD_ECOL6</name>
<reference key="1">
    <citation type="journal article" date="2002" name="Proc. Natl. Acad. Sci. U.S.A.">
        <title>Extensive mosaic structure revealed by the complete genome sequence of uropathogenic Escherichia coli.</title>
        <authorList>
            <person name="Welch R.A."/>
            <person name="Burland V."/>
            <person name="Plunkett G. III"/>
            <person name="Redford P."/>
            <person name="Roesch P."/>
            <person name="Rasko D."/>
            <person name="Buckles E.L."/>
            <person name="Liou S.-R."/>
            <person name="Boutin A."/>
            <person name="Hackett J."/>
            <person name="Stroud D."/>
            <person name="Mayhew G.F."/>
            <person name="Rose D.J."/>
            <person name="Zhou S."/>
            <person name="Schwartz D.C."/>
            <person name="Perna N.T."/>
            <person name="Mobley H.L.T."/>
            <person name="Donnenberg M.S."/>
            <person name="Blattner F.R."/>
        </authorList>
    </citation>
    <scope>NUCLEOTIDE SEQUENCE [LARGE SCALE GENOMIC DNA]</scope>
    <source>
        <strain>CFT073 / ATCC 700928 / UPEC</strain>
    </source>
</reference>
<sequence length="309" mass="32417">MTQFAFVFPGQGSQTVGMLADMAASYPIVEETFAEASAALGYDLWALTQQGPAEELNKTWQTQPALLTASVALYRVWQQQGGKAPAMMAGHSLGEYSALVCAGVIDFADAVRLVEMRGKFMQEAVPEGTGAMAAIIGLDDASIAKACEEAAEGQVVSPVNFNSPGQVVIAGHKEAVERAGAACKAAGAKRALPLPVSVPSHCALMKPAADKLAVELAKITFNAPTVPVVNNVDVKCETNGDAIRDALVRQLYNPVQWTKSVEYMAAQGVEHLYEVGPGKVLTGLTKRIVDTLTASALNEPSAMAAALEL</sequence>
<organism>
    <name type="scientific">Escherichia coli O6:H1 (strain CFT073 / ATCC 700928 / UPEC)</name>
    <dbReference type="NCBI Taxonomy" id="199310"/>
    <lineage>
        <taxon>Bacteria</taxon>
        <taxon>Pseudomonadati</taxon>
        <taxon>Pseudomonadota</taxon>
        <taxon>Gammaproteobacteria</taxon>
        <taxon>Enterobacterales</taxon>
        <taxon>Enterobacteriaceae</taxon>
        <taxon>Escherichia</taxon>
    </lineage>
</organism>
<accession>P0AAJ0</accession>
<accession>P25715</accession>
<evidence type="ECO:0000250" key="1"/>
<evidence type="ECO:0000305" key="2"/>
<gene>
    <name type="primary">fabD</name>
    <name type="ordered locus">c1361</name>
</gene>
<keyword id="KW-0012">Acyltransferase</keyword>
<keyword id="KW-0275">Fatty acid biosynthesis</keyword>
<keyword id="KW-0276">Fatty acid metabolism</keyword>
<keyword id="KW-0444">Lipid biosynthesis</keyword>
<keyword id="KW-0443">Lipid metabolism</keyword>
<keyword id="KW-1185">Reference proteome</keyword>
<keyword id="KW-0808">Transferase</keyword>
<feature type="initiator methionine" description="Removed" evidence="1">
    <location>
        <position position="1"/>
    </location>
</feature>
<feature type="chain" id="PRO_0000194215" description="Malonyl CoA-acyl carrier protein transacylase">
    <location>
        <begin position="2"/>
        <end position="309"/>
    </location>
</feature>
<feature type="active site" evidence="1">
    <location>
        <position position="92"/>
    </location>
</feature>
<feature type="active site" evidence="1">
    <location>
        <position position="201"/>
    </location>
</feature>